<comment type="function">
    <text evidence="1">Catalyzes an early step in the biosynthesis of tetrapyrroles. Binds two molecules of 5-aminolevulinate per subunit, each at a distinct site, and catalyzes their condensation to form porphobilinogen (By similarity).</text>
</comment>
<comment type="catalytic activity">
    <reaction>
        <text>2 5-aminolevulinate = porphobilinogen + 2 H2O + H(+)</text>
        <dbReference type="Rhea" id="RHEA:24064"/>
        <dbReference type="ChEBI" id="CHEBI:15377"/>
        <dbReference type="ChEBI" id="CHEBI:15378"/>
        <dbReference type="ChEBI" id="CHEBI:58126"/>
        <dbReference type="ChEBI" id="CHEBI:356416"/>
        <dbReference type="EC" id="4.2.1.24"/>
    </reaction>
</comment>
<comment type="cofactor">
    <cofactor evidence="1">
        <name>Zn(2+)</name>
        <dbReference type="ChEBI" id="CHEBI:29105"/>
    </cofactor>
    <text evidence="1">Binds 1 zinc ion per monomer.</text>
</comment>
<comment type="pathway">
    <text>Porphyrin-containing compound metabolism; protoporphyrin-IX biosynthesis; coproporphyrinogen-III from 5-aminolevulinate: step 1/4.</text>
</comment>
<comment type="subunit">
    <text evidence="1">Homooctamer.</text>
</comment>
<comment type="similarity">
    <text evidence="2">Belongs to the ALAD family.</text>
</comment>
<keyword id="KW-0350">Heme biosynthesis</keyword>
<keyword id="KW-0456">Lyase</keyword>
<keyword id="KW-0460">Magnesium</keyword>
<keyword id="KW-0479">Metal-binding</keyword>
<keyword id="KW-0627">Porphyrin biosynthesis</keyword>
<keyword id="KW-1185">Reference proteome</keyword>
<keyword id="KW-0862">Zinc</keyword>
<protein>
    <recommendedName>
        <fullName>Delta-aminolevulinic acid dehydratase</fullName>
        <shortName>ALAD</shortName>
        <shortName>ALADH</shortName>
        <ecNumber>4.2.1.24</ecNumber>
    </recommendedName>
    <alternativeName>
        <fullName>Porphobilinogen synthase</fullName>
    </alternativeName>
</protein>
<reference key="1">
    <citation type="journal article" date="2000" name="Nucleic Acids Res.">
        <title>Complete genome sequence of the alkaliphilic bacterium Bacillus halodurans and genomic sequence comparison with Bacillus subtilis.</title>
        <authorList>
            <person name="Takami H."/>
            <person name="Nakasone K."/>
            <person name="Takaki Y."/>
            <person name="Maeno G."/>
            <person name="Sasaki R."/>
            <person name="Masui N."/>
            <person name="Fuji F."/>
            <person name="Hirama C."/>
            <person name="Nakamura Y."/>
            <person name="Ogasawara N."/>
            <person name="Kuhara S."/>
            <person name="Horikoshi K."/>
        </authorList>
    </citation>
    <scope>NUCLEOTIDE SEQUENCE [LARGE SCALE GENOMIC DNA]</scope>
    <source>
        <strain>ATCC BAA-125 / DSM 18197 / FERM 7344 / JCM 9153 / C-125</strain>
    </source>
</reference>
<name>HEM2_HALH5</name>
<organism>
    <name type="scientific">Halalkalibacterium halodurans (strain ATCC BAA-125 / DSM 18197 / FERM 7344 / JCM 9153 / C-125)</name>
    <name type="common">Bacillus halodurans</name>
    <dbReference type="NCBI Taxonomy" id="272558"/>
    <lineage>
        <taxon>Bacteria</taxon>
        <taxon>Bacillati</taxon>
        <taxon>Bacillota</taxon>
        <taxon>Bacilli</taxon>
        <taxon>Bacillales</taxon>
        <taxon>Bacillaceae</taxon>
        <taxon>Halalkalibacterium (ex Joshi et al. 2022)</taxon>
    </lineage>
</organism>
<feature type="chain" id="PRO_0000140492" description="Delta-aminolevulinic acid dehydratase">
    <location>
        <begin position="1"/>
        <end position="328"/>
    </location>
</feature>
<feature type="active site" description="Schiff-base intermediate with substrate" evidence="1">
    <location>
        <position position="197"/>
    </location>
</feature>
<feature type="active site" description="Schiff-base intermediate with substrate" evidence="1">
    <location>
        <position position="250"/>
    </location>
</feature>
<feature type="binding site" evidence="1">
    <location>
        <position position="122"/>
    </location>
    <ligand>
        <name>Zn(2+)</name>
        <dbReference type="ChEBI" id="CHEBI:29105"/>
        <note>catalytic</note>
    </ligand>
</feature>
<feature type="binding site" evidence="1">
    <location>
        <position position="124"/>
    </location>
    <ligand>
        <name>Zn(2+)</name>
        <dbReference type="ChEBI" id="CHEBI:29105"/>
        <note>catalytic</note>
    </ligand>
</feature>
<feature type="binding site" evidence="1">
    <location>
        <position position="132"/>
    </location>
    <ligand>
        <name>Zn(2+)</name>
        <dbReference type="ChEBI" id="CHEBI:29105"/>
        <note>catalytic</note>
    </ligand>
</feature>
<feature type="binding site" evidence="1">
    <location>
        <position position="207"/>
    </location>
    <ligand>
        <name>5-aminolevulinate</name>
        <dbReference type="ChEBI" id="CHEBI:356416"/>
        <label>1</label>
    </ligand>
</feature>
<feature type="binding site" evidence="1">
    <location>
        <position position="219"/>
    </location>
    <ligand>
        <name>5-aminolevulinate</name>
        <dbReference type="ChEBI" id="CHEBI:356416"/>
        <label>1</label>
    </ligand>
</feature>
<feature type="binding site" evidence="1">
    <location>
        <position position="235"/>
    </location>
    <ligand>
        <name>Mg(2+)</name>
        <dbReference type="ChEBI" id="CHEBI:18420"/>
    </ligand>
</feature>
<feature type="binding site" evidence="1">
    <location>
        <position position="276"/>
    </location>
    <ligand>
        <name>5-aminolevulinate</name>
        <dbReference type="ChEBI" id="CHEBI:356416"/>
        <label>2</label>
    </ligand>
</feature>
<feature type="binding site" evidence="1">
    <location>
        <position position="315"/>
    </location>
    <ligand>
        <name>5-aminolevulinate</name>
        <dbReference type="ChEBI" id="CHEBI:356416"/>
        <label>2</label>
    </ligand>
</feature>
<sequence>MGQDLTFKRHRRLRQTAAIRNMVRETKLHIDDLIYPIFVKEGEGVRQEVPSMPNVYQLSLDQLDAEVDEIVSLGIPAIILFGVPAEKDAVGSAAYHEHGIVQQAIRQVKESYPDLTVIADTCLCQFTDHGHCGVIEEGKILNDPSLDLLARTAVSQAKAGADIIAPSNMMDGFVAAIRAGLDSAGFTDVPVMSYAVKYASAFYGPFRDAAHSSPVFGDRKTYQMDPANRLEALREARSDVEEGADFLIVKPALSYLDIIREVKNETGLPVVAYNVSGEYSMIKAASLQGWIDEKSTVLEKLISMKRAGADLILTYFAKDVARWLNEEK</sequence>
<evidence type="ECO:0000250" key="1"/>
<evidence type="ECO:0000305" key="2"/>
<accession>Q9K8G2</accession>
<dbReference type="EC" id="4.2.1.24"/>
<dbReference type="EMBL" id="BA000004">
    <property type="protein sequence ID" value="BAB06763.1"/>
    <property type="molecule type" value="Genomic_DNA"/>
</dbReference>
<dbReference type="PIR" id="D84030">
    <property type="entry name" value="D84030"/>
</dbReference>
<dbReference type="RefSeq" id="WP_010899188.1">
    <property type="nucleotide sequence ID" value="NC_002570.2"/>
</dbReference>
<dbReference type="SMR" id="Q9K8G2"/>
<dbReference type="STRING" id="272558.gene:10728954"/>
<dbReference type="KEGG" id="bha:BH3044"/>
<dbReference type="eggNOG" id="COG0113">
    <property type="taxonomic scope" value="Bacteria"/>
</dbReference>
<dbReference type="HOGENOM" id="CLU_035731_0_0_9"/>
<dbReference type="OrthoDB" id="9805001at2"/>
<dbReference type="UniPathway" id="UPA00251">
    <property type="reaction ID" value="UER00318"/>
</dbReference>
<dbReference type="Proteomes" id="UP000001258">
    <property type="component" value="Chromosome"/>
</dbReference>
<dbReference type="GO" id="GO:0005829">
    <property type="term" value="C:cytosol"/>
    <property type="evidence" value="ECO:0007669"/>
    <property type="project" value="TreeGrafter"/>
</dbReference>
<dbReference type="GO" id="GO:0004655">
    <property type="term" value="F:porphobilinogen synthase activity"/>
    <property type="evidence" value="ECO:0007669"/>
    <property type="project" value="UniProtKB-EC"/>
</dbReference>
<dbReference type="GO" id="GO:0008270">
    <property type="term" value="F:zinc ion binding"/>
    <property type="evidence" value="ECO:0007669"/>
    <property type="project" value="TreeGrafter"/>
</dbReference>
<dbReference type="GO" id="GO:0006782">
    <property type="term" value="P:protoporphyrinogen IX biosynthetic process"/>
    <property type="evidence" value="ECO:0007669"/>
    <property type="project" value="UniProtKB-UniPathway"/>
</dbReference>
<dbReference type="CDD" id="cd00384">
    <property type="entry name" value="ALAD_PBGS"/>
    <property type="match status" value="1"/>
</dbReference>
<dbReference type="FunFam" id="3.20.20.70:FF:000019">
    <property type="entry name" value="Delta-aminolevulinic acid dehydratase"/>
    <property type="match status" value="1"/>
</dbReference>
<dbReference type="Gene3D" id="3.20.20.70">
    <property type="entry name" value="Aldolase class I"/>
    <property type="match status" value="1"/>
</dbReference>
<dbReference type="InterPro" id="IPR001731">
    <property type="entry name" value="ALAD"/>
</dbReference>
<dbReference type="InterPro" id="IPR030656">
    <property type="entry name" value="ALAD_AS"/>
</dbReference>
<dbReference type="InterPro" id="IPR013785">
    <property type="entry name" value="Aldolase_TIM"/>
</dbReference>
<dbReference type="NCBIfam" id="NF006762">
    <property type="entry name" value="PRK09283.1"/>
    <property type="match status" value="1"/>
</dbReference>
<dbReference type="PANTHER" id="PTHR11458">
    <property type="entry name" value="DELTA-AMINOLEVULINIC ACID DEHYDRATASE"/>
    <property type="match status" value="1"/>
</dbReference>
<dbReference type="PANTHER" id="PTHR11458:SF0">
    <property type="entry name" value="DELTA-AMINOLEVULINIC ACID DEHYDRATASE"/>
    <property type="match status" value="1"/>
</dbReference>
<dbReference type="Pfam" id="PF00490">
    <property type="entry name" value="ALAD"/>
    <property type="match status" value="1"/>
</dbReference>
<dbReference type="PIRSF" id="PIRSF001415">
    <property type="entry name" value="Porphbilin_synth"/>
    <property type="match status" value="1"/>
</dbReference>
<dbReference type="PRINTS" id="PR00144">
    <property type="entry name" value="DALDHYDRTASE"/>
</dbReference>
<dbReference type="SMART" id="SM01004">
    <property type="entry name" value="ALAD"/>
    <property type="match status" value="1"/>
</dbReference>
<dbReference type="SUPFAM" id="SSF51569">
    <property type="entry name" value="Aldolase"/>
    <property type="match status" value="1"/>
</dbReference>
<dbReference type="PROSITE" id="PS00169">
    <property type="entry name" value="D_ALA_DEHYDRATASE"/>
    <property type="match status" value="1"/>
</dbReference>
<proteinExistence type="inferred from homology"/>
<gene>
    <name type="primary">hemB</name>
    <name type="ordered locus">BH3044</name>
</gene>